<evidence type="ECO:0000255" key="1">
    <source>
        <dbReference type="HAMAP-Rule" id="MF_01325"/>
    </source>
</evidence>
<evidence type="ECO:0000305" key="2"/>
<organism>
    <name type="scientific">Desulfotalea psychrophila (strain LSv54 / DSM 12343)</name>
    <dbReference type="NCBI Taxonomy" id="177439"/>
    <lineage>
        <taxon>Bacteria</taxon>
        <taxon>Pseudomonadati</taxon>
        <taxon>Thermodesulfobacteriota</taxon>
        <taxon>Desulfobulbia</taxon>
        <taxon>Desulfobulbales</taxon>
        <taxon>Desulfocapsaceae</taxon>
        <taxon>Desulfotalea</taxon>
    </lineage>
</organism>
<comment type="function">
    <text evidence="1">One of the primary rRNA binding proteins, it binds directly near the 3'-end of the 23S rRNA, where it nucleates assembly of the 50S subunit.</text>
</comment>
<comment type="subunit">
    <text evidence="1">Part of the 50S ribosomal subunit. Forms a cluster with proteins L14 and L19.</text>
</comment>
<comment type="similarity">
    <text evidence="1">Belongs to the universal ribosomal protein uL3 family.</text>
</comment>
<keyword id="KW-1185">Reference proteome</keyword>
<keyword id="KW-0687">Ribonucleoprotein</keyword>
<keyword id="KW-0689">Ribosomal protein</keyword>
<keyword id="KW-0694">RNA-binding</keyword>
<keyword id="KW-0699">rRNA-binding</keyword>
<gene>
    <name evidence="1" type="primary">rplC</name>
    <name type="ordered locus">DP1124</name>
</gene>
<accession>Q6AP71</accession>
<sequence>MPKTMGILGKNIGMTRVYGEVGQAIPVTVVQAGPCKVLQVKTNATDGYNAVQVGFENKKSSRVNKAEAGHFAKSDSEGFYFVREFRVVDPATYNVGDMISVDALFKAGDIVDVQGTSKGRGFQGVIKRWGFKGGPGGHGSKHHRAPGSIGCSAYPGRVVKGKKMPGRMGNDTVLKKNVTVVDVRIDENVVLLKGPMPGAKNGLLKIYSK</sequence>
<proteinExistence type="inferred from homology"/>
<dbReference type="EMBL" id="CR522870">
    <property type="protein sequence ID" value="CAG35853.1"/>
    <property type="molecule type" value="Genomic_DNA"/>
</dbReference>
<dbReference type="RefSeq" id="WP_011188367.1">
    <property type="nucleotide sequence ID" value="NC_006138.1"/>
</dbReference>
<dbReference type="SMR" id="Q6AP71"/>
<dbReference type="STRING" id="177439.DP1124"/>
<dbReference type="KEGG" id="dps:DP1124"/>
<dbReference type="eggNOG" id="COG0087">
    <property type="taxonomic scope" value="Bacteria"/>
</dbReference>
<dbReference type="HOGENOM" id="CLU_044142_4_1_7"/>
<dbReference type="OrthoDB" id="9806135at2"/>
<dbReference type="Proteomes" id="UP000000602">
    <property type="component" value="Chromosome"/>
</dbReference>
<dbReference type="GO" id="GO:0022625">
    <property type="term" value="C:cytosolic large ribosomal subunit"/>
    <property type="evidence" value="ECO:0007669"/>
    <property type="project" value="TreeGrafter"/>
</dbReference>
<dbReference type="GO" id="GO:0019843">
    <property type="term" value="F:rRNA binding"/>
    <property type="evidence" value="ECO:0007669"/>
    <property type="project" value="UniProtKB-UniRule"/>
</dbReference>
<dbReference type="GO" id="GO:0003735">
    <property type="term" value="F:structural constituent of ribosome"/>
    <property type="evidence" value="ECO:0007669"/>
    <property type="project" value="InterPro"/>
</dbReference>
<dbReference type="GO" id="GO:0006412">
    <property type="term" value="P:translation"/>
    <property type="evidence" value="ECO:0007669"/>
    <property type="project" value="UniProtKB-UniRule"/>
</dbReference>
<dbReference type="FunFam" id="2.40.30.10:FF:000004">
    <property type="entry name" value="50S ribosomal protein L3"/>
    <property type="match status" value="1"/>
</dbReference>
<dbReference type="FunFam" id="3.30.160.810:FF:000001">
    <property type="entry name" value="50S ribosomal protein L3"/>
    <property type="match status" value="1"/>
</dbReference>
<dbReference type="Gene3D" id="3.30.160.810">
    <property type="match status" value="1"/>
</dbReference>
<dbReference type="Gene3D" id="2.40.30.10">
    <property type="entry name" value="Translation factors"/>
    <property type="match status" value="1"/>
</dbReference>
<dbReference type="HAMAP" id="MF_01325_B">
    <property type="entry name" value="Ribosomal_uL3_B"/>
    <property type="match status" value="1"/>
</dbReference>
<dbReference type="InterPro" id="IPR000597">
    <property type="entry name" value="Ribosomal_uL3"/>
</dbReference>
<dbReference type="InterPro" id="IPR019927">
    <property type="entry name" value="Ribosomal_uL3_bac/org-type"/>
</dbReference>
<dbReference type="InterPro" id="IPR019926">
    <property type="entry name" value="Ribosomal_uL3_CS"/>
</dbReference>
<dbReference type="InterPro" id="IPR009000">
    <property type="entry name" value="Transl_B-barrel_sf"/>
</dbReference>
<dbReference type="NCBIfam" id="TIGR03625">
    <property type="entry name" value="L3_bact"/>
    <property type="match status" value="1"/>
</dbReference>
<dbReference type="PANTHER" id="PTHR11229">
    <property type="entry name" value="50S RIBOSOMAL PROTEIN L3"/>
    <property type="match status" value="1"/>
</dbReference>
<dbReference type="PANTHER" id="PTHR11229:SF16">
    <property type="entry name" value="LARGE RIBOSOMAL SUBUNIT PROTEIN UL3C"/>
    <property type="match status" value="1"/>
</dbReference>
<dbReference type="Pfam" id="PF00297">
    <property type="entry name" value="Ribosomal_L3"/>
    <property type="match status" value="1"/>
</dbReference>
<dbReference type="SUPFAM" id="SSF50447">
    <property type="entry name" value="Translation proteins"/>
    <property type="match status" value="1"/>
</dbReference>
<dbReference type="PROSITE" id="PS00474">
    <property type="entry name" value="RIBOSOMAL_L3"/>
    <property type="match status" value="1"/>
</dbReference>
<protein>
    <recommendedName>
        <fullName evidence="1">Large ribosomal subunit protein uL3</fullName>
    </recommendedName>
    <alternativeName>
        <fullName evidence="2">50S ribosomal protein L3</fullName>
    </alternativeName>
</protein>
<feature type="chain" id="PRO_0000241340" description="Large ribosomal subunit protein uL3">
    <location>
        <begin position="1"/>
        <end position="209"/>
    </location>
</feature>
<name>RL3_DESPS</name>
<reference key="1">
    <citation type="journal article" date="2004" name="Environ. Microbiol.">
        <title>The genome of Desulfotalea psychrophila, a sulfate-reducing bacterium from permanently cold Arctic sediments.</title>
        <authorList>
            <person name="Rabus R."/>
            <person name="Ruepp A."/>
            <person name="Frickey T."/>
            <person name="Rattei T."/>
            <person name="Fartmann B."/>
            <person name="Stark M."/>
            <person name="Bauer M."/>
            <person name="Zibat A."/>
            <person name="Lombardot T."/>
            <person name="Becker I."/>
            <person name="Amann J."/>
            <person name="Gellner K."/>
            <person name="Teeling H."/>
            <person name="Leuschner W.D."/>
            <person name="Gloeckner F.-O."/>
            <person name="Lupas A.N."/>
            <person name="Amann R."/>
            <person name="Klenk H.-P."/>
        </authorList>
    </citation>
    <scope>NUCLEOTIDE SEQUENCE [LARGE SCALE GENOMIC DNA]</scope>
    <source>
        <strain>DSM 12343 / LSv54</strain>
    </source>
</reference>